<gene>
    <name evidence="2" type="primary">gB</name>
    <name type="ORF">UL27</name>
</gene>
<accession>P06437</accession>
<proteinExistence type="evidence at protein level"/>
<protein>
    <recommendedName>
        <fullName evidence="2">Envelope glycoprotein B</fullName>
        <shortName evidence="2">gB</shortName>
    </recommendedName>
</protein>
<evidence type="ECO:0000250" key="1"/>
<evidence type="ECO:0000255" key="2">
    <source>
        <dbReference type="HAMAP-Rule" id="MF_04032"/>
    </source>
</evidence>
<evidence type="ECO:0000256" key="3">
    <source>
        <dbReference type="SAM" id="MobiDB-lite"/>
    </source>
</evidence>
<evidence type="ECO:0000269" key="4">
    <source>
    </source>
</evidence>
<evidence type="ECO:0000269" key="5">
    <source>
    </source>
</evidence>
<evidence type="ECO:0000269" key="6">
    <source>
    </source>
</evidence>
<evidence type="ECO:0000269" key="7">
    <source>
    </source>
</evidence>
<evidence type="ECO:0000269" key="8">
    <source>
    </source>
</evidence>
<evidence type="ECO:0000269" key="9">
    <source>
    </source>
</evidence>
<evidence type="ECO:0007744" key="10">
    <source>
        <dbReference type="PDB" id="2GUM"/>
    </source>
</evidence>
<evidence type="ECO:0007829" key="11">
    <source>
        <dbReference type="PDB" id="2GUM"/>
    </source>
</evidence>
<evidence type="ECO:0007829" key="12">
    <source>
        <dbReference type="PDB" id="3NW8"/>
    </source>
</evidence>
<evidence type="ECO:0007829" key="13">
    <source>
        <dbReference type="PDB" id="3NWA"/>
    </source>
</evidence>
<evidence type="ECO:0007829" key="14">
    <source>
        <dbReference type="PDB" id="3NWD"/>
    </source>
</evidence>
<evidence type="ECO:0007829" key="15">
    <source>
        <dbReference type="PDB" id="3NWF"/>
    </source>
</evidence>
<organism>
    <name type="scientific">Human herpesvirus 1 (strain KOS)</name>
    <name type="common">HHV-1</name>
    <name type="synonym">Human herpes simplex virus 1</name>
    <dbReference type="NCBI Taxonomy" id="10306"/>
    <lineage>
        <taxon>Viruses</taxon>
        <taxon>Duplodnaviria</taxon>
        <taxon>Heunggongvirae</taxon>
        <taxon>Peploviricota</taxon>
        <taxon>Herviviricetes</taxon>
        <taxon>Herpesvirales</taxon>
        <taxon>Orthoherpesviridae</taxon>
        <taxon>Alphaherpesvirinae</taxon>
        <taxon>Simplexvirus</taxon>
        <taxon>Simplexvirus humanalpha1</taxon>
        <taxon>Human herpesvirus 1</taxon>
    </lineage>
</organism>
<organismHost>
    <name type="scientific">Homo sapiens</name>
    <name type="common">Human</name>
    <dbReference type="NCBI Taxonomy" id="9606"/>
</organismHost>
<comment type="function">
    <text evidence="2 5">Envelope glycoprotein that forms spikes at the surface of virion envelope and binds to the host cell entry receptors MYH9/NMMHC-IIA and MYH10/NMMHC-IIB, promoting the virus entry into host cells. Essential for the initial attachment to heparan sulfate moieties of the host cell surface proteoglycans. Involved in fusion of viral and cellular membranes leading to virus entry into the host cell: following initial binding to its host cell entry receptors, membrane fusion is mediated by the fusion machinery composed at least of gB and the heterodimer gH/gL. May be involved in the fusion between the virion envelope and the outer nuclear membrane during virion egress. Also plays a role, together with gK, in virus-induced cell-to-cell fusion (syncytia formation).</text>
</comment>
<comment type="subunit">
    <text evidence="2 6">Homotrimer; disulfide-linked. Interacts with host receptor MYH9/NMMHC-IIA (By similarity). Interacts with host receptor MYH10/NMMHC-IIB (By similarity). Binds to heparan sulfate proteoglycans. Interacts with gH/gL heterodimer (By similarity). Interacts with the host coreceptor PILRA.</text>
</comment>
<comment type="interaction">
    <interactant intactId="EBI-16064668">
        <id>P06437</id>
    </interactant>
    <interactant intactId="EBI-16064668">
        <id>P06437</id>
        <label>gB</label>
    </interactant>
    <organismsDiffer>false</organismsDiffer>
    <experiments>3</experiments>
</comment>
<comment type="subcellular location">
    <subcellularLocation>
        <location evidence="2">Virion membrane</location>
        <topology evidence="2">Single-pass type I membrane protein</topology>
    </subcellularLocation>
    <subcellularLocation>
        <location evidence="2">Host cell membrane</location>
        <topology evidence="2">Single-pass type I membrane protein</topology>
    </subcellularLocation>
    <subcellularLocation>
        <location evidence="2">Host endosome membrane</location>
        <topology evidence="2">Single-pass type I membrane protein</topology>
    </subcellularLocation>
    <subcellularLocation>
        <location evidence="2">Host Golgi apparatus membrane</location>
        <topology evidence="2">Single-pass type I membrane protein</topology>
    </subcellularLocation>
    <text evidence="2">During virion morphogenesis, this protein probably accumulates in the endosomes and trans-Golgi where secondary envelopment occurs. It is probably transported to the cell surface from where it is endocytosed and directed to the trans-Golgi network (TGN).</text>
</comment>
<comment type="PTM">
    <text evidence="7 8">The cytoplasmic tail is phosphorylated by the viral kinase US3. Phosphorylation may be linked to a down-regulation of gB expression on cell surface.</text>
</comment>
<comment type="PTM">
    <text evidence="1">ubiquitinated.</text>
</comment>
<comment type="similarity">
    <text evidence="2">Belongs to the herpesviridae glycoprotein B family.</text>
</comment>
<dbReference type="EMBL" id="K01760">
    <property type="protein sequence ID" value="AAA45774.1"/>
    <property type="molecule type" value="Genomic_DNA"/>
</dbReference>
<dbReference type="PIR" id="A03751">
    <property type="entry name" value="VGBEK1"/>
</dbReference>
<dbReference type="PDB" id="2GUM">
    <property type="method" value="X-ray"/>
    <property type="resolution" value="2.10 A"/>
    <property type="chains" value="A/B/C=103-730"/>
</dbReference>
<dbReference type="PDB" id="3NW8">
    <property type="method" value="X-ray"/>
    <property type="resolution" value="2.76 A"/>
    <property type="chains" value="A/B/C/D=30-730"/>
</dbReference>
<dbReference type="PDB" id="3NWA">
    <property type="method" value="X-ray"/>
    <property type="resolution" value="2.26 A"/>
    <property type="chains" value="A/B/C/D=30-730"/>
</dbReference>
<dbReference type="PDB" id="3NWD">
    <property type="method" value="X-ray"/>
    <property type="resolution" value="2.88 A"/>
    <property type="chains" value="A/B/C/D=30-730"/>
</dbReference>
<dbReference type="PDB" id="3NWF">
    <property type="method" value="X-ray"/>
    <property type="resolution" value="3.00 A"/>
    <property type="chains" value="A/B/C/D=30-730"/>
</dbReference>
<dbReference type="PDB" id="3WV0">
    <property type="method" value="X-ray"/>
    <property type="resolution" value="2.30 A"/>
    <property type="chains" value="X/Y=50-56"/>
</dbReference>
<dbReference type="PDB" id="4BOM">
    <property type="method" value="EM"/>
    <property type="resolution" value="27.00 A"/>
    <property type="chains" value="A/B/C=103-724"/>
</dbReference>
<dbReference type="PDB" id="4HSI">
    <property type="method" value="X-ray"/>
    <property type="resolution" value="3.10 A"/>
    <property type="chains" value="A/B/C/D=61-730"/>
</dbReference>
<dbReference type="PDB" id="4L1R">
    <property type="method" value="X-ray"/>
    <property type="resolution" value="3.03 A"/>
    <property type="chains" value="A/B=30-730"/>
</dbReference>
<dbReference type="PDB" id="5XO2">
    <property type="method" value="X-ray"/>
    <property type="resolution" value="2.20 A"/>
    <property type="chains" value="X/Y=50-56"/>
</dbReference>
<dbReference type="PDB" id="6Z9M">
    <property type="method" value="EM"/>
    <property type="resolution" value="9.10 A"/>
    <property type="chains" value="A/B/C=1-904"/>
</dbReference>
<dbReference type="PDB" id="7UHZ">
    <property type="method" value="EM"/>
    <property type="resolution" value="3.30 A"/>
    <property type="chains" value="A/B/C=103-730"/>
</dbReference>
<dbReference type="PDB" id="7UI0">
    <property type="method" value="EM"/>
    <property type="resolution" value="3.40 A"/>
    <property type="chains" value="A/B/C=103-730"/>
</dbReference>
<dbReference type="PDB" id="8KFA">
    <property type="method" value="EM"/>
    <property type="resolution" value="3.04 A"/>
    <property type="chains" value="A/B/C=111-725"/>
</dbReference>
<dbReference type="PDBsum" id="2GUM"/>
<dbReference type="PDBsum" id="3NW8"/>
<dbReference type="PDBsum" id="3NWA"/>
<dbReference type="PDBsum" id="3NWD"/>
<dbReference type="PDBsum" id="3NWF"/>
<dbReference type="PDBsum" id="3WV0"/>
<dbReference type="PDBsum" id="4BOM"/>
<dbReference type="PDBsum" id="4HSI"/>
<dbReference type="PDBsum" id="4L1R"/>
<dbReference type="PDBsum" id="5XO2"/>
<dbReference type="PDBsum" id="6Z9M"/>
<dbReference type="PDBsum" id="7UHZ"/>
<dbReference type="PDBsum" id="7UI0"/>
<dbReference type="PDBsum" id="8KFA"/>
<dbReference type="EMDB" id="EMD-2379"/>
<dbReference type="EMDB" id="EMD-2380"/>
<dbReference type="EMDB" id="EMD-26520"/>
<dbReference type="EMDB" id="EMD-26521"/>
<dbReference type="EMDB" id="EMD-3362"/>
<dbReference type="EMDB" id="EMD-37203"/>
<dbReference type="SMR" id="P06437"/>
<dbReference type="DIP" id="DIP-60474N"/>
<dbReference type="GlyCosmos" id="P06437">
    <property type="glycosylation" value="6 sites, No reported glycans"/>
</dbReference>
<dbReference type="iPTMnet" id="P06437"/>
<dbReference type="EvolutionaryTrace" id="P06437"/>
<dbReference type="GO" id="GO:0044175">
    <property type="term" value="C:host cell endosome membrane"/>
    <property type="evidence" value="ECO:0007669"/>
    <property type="project" value="UniProtKB-SubCell"/>
</dbReference>
<dbReference type="GO" id="GO:0044178">
    <property type="term" value="C:host cell Golgi membrane"/>
    <property type="evidence" value="ECO:0007669"/>
    <property type="project" value="UniProtKB-SubCell"/>
</dbReference>
<dbReference type="GO" id="GO:0020002">
    <property type="term" value="C:host cell plasma membrane"/>
    <property type="evidence" value="ECO:0007669"/>
    <property type="project" value="UniProtKB-SubCell"/>
</dbReference>
<dbReference type="GO" id="GO:0016020">
    <property type="term" value="C:membrane"/>
    <property type="evidence" value="ECO:0007669"/>
    <property type="project" value="UniProtKB-KW"/>
</dbReference>
<dbReference type="GO" id="GO:0019031">
    <property type="term" value="C:viral envelope"/>
    <property type="evidence" value="ECO:0007669"/>
    <property type="project" value="UniProtKB-KW"/>
</dbReference>
<dbReference type="GO" id="GO:0055036">
    <property type="term" value="C:virion membrane"/>
    <property type="evidence" value="ECO:0007669"/>
    <property type="project" value="UniProtKB-SubCell"/>
</dbReference>
<dbReference type="GO" id="GO:0042802">
    <property type="term" value="F:identical protein binding"/>
    <property type="evidence" value="ECO:0000353"/>
    <property type="project" value="IntAct"/>
</dbReference>
<dbReference type="GO" id="GO:0046718">
    <property type="term" value="P:symbiont entry into host cell"/>
    <property type="evidence" value="ECO:0007669"/>
    <property type="project" value="UniProtKB-KW"/>
</dbReference>
<dbReference type="GO" id="GO:0019062">
    <property type="term" value="P:virion attachment to host cell"/>
    <property type="evidence" value="ECO:0007669"/>
    <property type="project" value="UniProtKB-KW"/>
</dbReference>
<dbReference type="FunFam" id="1.20.5.1890:FF:000001">
    <property type="entry name" value="Envelope glycoprotein B"/>
    <property type="match status" value="1"/>
</dbReference>
<dbReference type="FunFam" id="2.30.29.100:FF:000001">
    <property type="entry name" value="Envelope glycoprotein B"/>
    <property type="match status" value="1"/>
</dbReference>
<dbReference type="FunFam" id="2.30.30.1230:FF:000001">
    <property type="entry name" value="Envelope glycoprotein B"/>
    <property type="match status" value="1"/>
</dbReference>
<dbReference type="FunFam" id="6.10.250.3280:FF:000001">
    <property type="entry name" value="Envelope glycoprotein B"/>
    <property type="match status" value="1"/>
</dbReference>
<dbReference type="Gene3D" id="1.20.5.1890">
    <property type="match status" value="1"/>
</dbReference>
<dbReference type="Gene3D" id="2.30.29.100">
    <property type="match status" value="1"/>
</dbReference>
<dbReference type="Gene3D" id="2.30.30.1230">
    <property type="match status" value="1"/>
</dbReference>
<dbReference type="Gene3D" id="6.10.250.3280">
    <property type="match status" value="1"/>
</dbReference>
<dbReference type="HAMAP" id="MF_04032">
    <property type="entry name" value="HSV_GB"/>
    <property type="match status" value="1"/>
</dbReference>
<dbReference type="InterPro" id="IPR035377">
    <property type="entry name" value="Glycoprot_B_PH1"/>
</dbReference>
<dbReference type="InterPro" id="IPR035381">
    <property type="entry name" value="Glycoprot_B_PH2"/>
</dbReference>
<dbReference type="InterPro" id="IPR038631">
    <property type="entry name" value="Glycoprot_B_PH2_sf"/>
</dbReference>
<dbReference type="InterPro" id="IPR055341">
    <property type="entry name" value="Glycoprotein_B_ecto_C"/>
</dbReference>
<dbReference type="InterPro" id="IPR000234">
    <property type="entry name" value="Herpes_Glycoprot_B"/>
</dbReference>
<dbReference type="Pfam" id="PF17416">
    <property type="entry name" value="Glycoprot_B_PH1"/>
    <property type="match status" value="1"/>
</dbReference>
<dbReference type="Pfam" id="PF17417">
    <property type="entry name" value="Glycoprot_B_PH2"/>
    <property type="match status" value="1"/>
</dbReference>
<dbReference type="Pfam" id="PF00606">
    <property type="entry name" value="Glycoprotein_B"/>
    <property type="match status" value="1"/>
</dbReference>
<dbReference type="SUPFAM" id="SSF161008">
    <property type="entry name" value="Viral glycoprotein ectodomain-like"/>
    <property type="match status" value="1"/>
</dbReference>
<name>GB_HHV1K</name>
<reference key="1">
    <citation type="journal article" date="1984" name="Virology">
        <title>Nucleotide sequence specifying the glycoprotein gene, gB, of herpes simplex virus type 1.</title>
        <authorList>
            <person name="Bzik D.J."/>
            <person name="Fox B.A."/>
            <person name="Deluca N.A."/>
            <person name="Person S."/>
        </authorList>
    </citation>
    <scope>NUCLEOTIDE SEQUENCE [GENOMIC DNA]</scope>
</reference>
<reference key="2">
    <citation type="journal article" date="1986" name="Virology">
        <title>The nucleotide sequence of the gB glycoprotein gene of HSV-2 and comparison with the corresponding gene of HSV-1.</title>
        <authorList>
            <person name="Bzik D.J."/>
            <person name="Debroy C."/>
            <person name="Fox B.A."/>
            <person name="Pederson N.E."/>
            <person name="Person S."/>
        </authorList>
    </citation>
    <scope>NUCLEOTIDE SEQUENCE [GENOMIC DNA]</scope>
    <scope>SEQUENCE REVISION</scope>
</reference>
<reference key="3">
    <citation type="submission" date="1987-04" db="EMBL/GenBank/DDBJ databases">
        <authorList>
            <person name="Pederson N.E."/>
        </authorList>
    </citation>
    <scope>SEQUENCE REVISION</scope>
</reference>
<reference key="4">
    <citation type="journal article" date="1994" name="J. Gen. Virol.">
        <title>Glycoprotein C-independent binding of herpes simplex virus to cells requires cell surface heparan sulphate and glycoprotein B.</title>
        <authorList>
            <person name="Herold B.C."/>
            <person name="Visalli R.J."/>
            <person name="Susmarski N."/>
            <person name="Brandt C.R."/>
            <person name="Spear P.G."/>
        </authorList>
    </citation>
    <scope>BINDING TO HEPARAN SULFATE</scope>
</reference>
<reference key="5">
    <citation type="journal article" date="2007" name="Proc. Natl. Acad. Sci. U.S.A.">
        <title>Herpes simplex virus type 1 mediates fusion through a hemifusion intermediate by sequential activity of glycoproteins D, H, L, and B.</title>
        <authorList>
            <person name="Subramanian R.P."/>
            <person name="Geraghty R.J."/>
        </authorList>
    </citation>
    <scope>FUNCTION</scope>
</reference>
<reference key="6">
    <citation type="journal article" date="2007" name="Proc. Natl. Acad. Sci. U.S.A.">
        <title>Bimolecular complementation reveals that glycoproteins gB and gH/gL of herpes simplex virus interact with each other during cell fusion.</title>
        <authorList>
            <person name="Atanasiu D."/>
            <person name="Whitbeck J.C."/>
            <person name="Cairns T.M."/>
            <person name="Reilly B."/>
            <person name="Cohen G.H."/>
            <person name="Eisenberg R.J."/>
        </authorList>
    </citation>
    <scope>INTERACTION WITH GH/GL HETERODIMER</scope>
</reference>
<reference key="7">
    <citation type="journal article" date="2008" name="Cell">
        <title>PILRalpha is a herpes simplex virus-1 entry coreceptor that associates with glycoprotein B.</title>
        <authorList>
            <person name="Satoh T."/>
            <person name="Arii J."/>
            <person name="Suenaga T."/>
            <person name="Wang J."/>
            <person name="Kogure A."/>
            <person name="Uehori J."/>
            <person name="Arase N."/>
            <person name="Shiratori I."/>
            <person name="Tanaka S."/>
            <person name="Kawaguchi Y."/>
            <person name="Spear P.G."/>
            <person name="Lanier L.L."/>
            <person name="Arase H."/>
        </authorList>
    </citation>
    <scope>INTERACTION WITH THE HUMAN CORECEPTOR PILRA</scope>
</reference>
<reference key="8">
    <citation type="journal article" date="2009" name="J. Virol.">
        <title>Herpes simplex virus 1 protein kinase Us3 phosphorylates viral envelope glycoprotein B and regulates its expression on the cell surface.</title>
        <authorList>
            <person name="Kato A."/>
            <person name="Arii J."/>
            <person name="Shiratori I."/>
            <person name="Akashi H."/>
            <person name="Arase H."/>
            <person name="Kawaguchi Y."/>
        </authorList>
    </citation>
    <scope>PHOSPHORYLATION AT THR-887 BY VIRAL KINASE US3</scope>
    <scope>MUTAGENESIS OF THR-887</scope>
</reference>
<reference key="9">
    <citation type="journal article" date="2009" name="J. Virol.">
        <title>Herpesvirus gB-induced fusion between the virion envelope and outer nuclear membrane during virus egress is regulated by the viral US3 kinase.</title>
        <authorList>
            <person name="Wisner T.W."/>
            <person name="Wright C.C."/>
            <person name="Kato A."/>
            <person name="Kawaguchi Y."/>
            <person name="Mou F."/>
            <person name="Baines J.D."/>
            <person name="Roller R.J."/>
            <person name="Johnson D.C."/>
        </authorList>
    </citation>
    <scope>PHOSPHORYLATION AT THR-887 BY VIRAL KINASE US3</scope>
    <scope>MUTAGENESIS OF THR-887</scope>
</reference>
<reference key="10">
    <citation type="journal article" date="2009" name="J. Virol.">
        <title>Herpes simplex virus glycoprotein B associates with target membranes via its fusion loops.</title>
        <authorList>
            <person name="Hannah B.P."/>
            <person name="Cairns T.M."/>
            <person name="Bender F.C."/>
            <person name="Whitbeck J.C."/>
            <person name="Lou H."/>
            <person name="Eisenberg R.J."/>
            <person name="Cohen G.H."/>
        </authorList>
    </citation>
    <scope>MUTAGENESIS OF TRP-174; TYR-179; HIS-263 AND ARG-264</scope>
</reference>
<reference key="11">
    <citation type="journal article" date="2006" name="Science">
        <title>Crystal structure of glycoprotein B from herpes simplex virus 1.</title>
        <authorList>
            <person name="Heldwein E.E."/>
            <person name="Lou H."/>
            <person name="Bender F.C."/>
            <person name="Cohen G.H."/>
            <person name="Eisenberg R.J."/>
            <person name="Harrison S.C."/>
        </authorList>
    </citation>
    <scope>X-RAY CRYSTALLOGRAPHY (2.10 ANGSTROMS) OF 103-730</scope>
    <scope>DISULFIDE BONDS</scope>
</reference>
<sequence length="904" mass="100368">MHQGAPSWGRRWFVVWALLGLTLGVLVASAAPTSPGTPGVAAATQAANGGPATPAPPPLGAAPTGDPKPKKNKKPKNPTPPRPAGDNATVAAGHATLREHLRDIKAENTDANFYVCPPPTGATVVQFEQPRRCPTRPEGQNYTEGIAVVFKENIAPYKFKATMYYKDVTVSQVWFGHRYSQFMGIFEDRAPVPFEEVIDKINAKGVCRSTAKYVRNNLETTAFHRDDHETDMELKPANAATRTSRGWHTTDLKYNPSRVEAFHRYGTTVNCIVEEVDARSVYPYDEFVLATGDFVYMSPFYGYREGSHTEHTTYAADRFKQVDGFYARDLTTKARATAPTTRNLLTTPKFTVAWDWVPKRPSVCTMTKWQEVDEMLRSEYGGSFRFSSDAISTTFTTNLTEYPLSRVDLGDCIGKDARDAMDRIFARRYNATHIKVGQPQYYQANGGFLIAYQPLLSNTLAELYVREHLREQSRKPPNPTPPPPGASANASVERIKTTSSIEFARLQFTYNHIQRHVNDMLGRVAIAWCELQNHELTLWNEARKLNPNAIASVTVGRRVSARMLGDVMAVSTCVPVAADNVIVQNSMRISSRPGACYSRPLVSFRYEDQGPLVEGQLGENNELRLTRDAIEPCTVGHRRYFTFGGGYVYFEEYAYSHQLSRADITTVSTFIDLNITMLEDHEFVPLEVYTRHEIKDSGLLDYTEVQRRNQLHDLRFADIDTVIHADANAAMFAGLGAFFEGMGDLGRAVGKVVMGIVGGVVSAVSGVSSFMSNPFGALAVGLLVLAGLAAAFFAFRYVMRLQSNPMKALYPLTTKELKNPTNPDASGEGEEGGDFDEAKLAEAREMIRYMALVSAMERTEHKAKKKGTSALLSAKVTDMVMRKRRNTNYTQVPNKDGDADEDDL</sequence>
<keyword id="KW-0002">3D-structure</keyword>
<keyword id="KW-1015">Disulfide bond</keyword>
<keyword id="KW-0325">Glycoprotein</keyword>
<keyword id="KW-1032">Host cell membrane</keyword>
<keyword id="KW-1039">Host endosome</keyword>
<keyword id="KW-1040">Host Golgi apparatus</keyword>
<keyword id="KW-1043">Host membrane</keyword>
<keyword id="KW-0945">Host-virus interaction</keyword>
<keyword id="KW-0472">Membrane</keyword>
<keyword id="KW-0597">Phosphoprotein</keyword>
<keyword id="KW-0732">Signal</keyword>
<keyword id="KW-0812">Transmembrane</keyword>
<keyword id="KW-1133">Transmembrane helix</keyword>
<keyword id="KW-0832">Ubl conjugation</keyword>
<keyword id="KW-1161">Viral attachment to host cell</keyword>
<keyword id="KW-0261">Viral envelope protein</keyword>
<keyword id="KW-0946">Virion</keyword>
<keyword id="KW-1160">Virus entry into host cell</keyword>
<feature type="signal peptide" evidence="2">
    <location>
        <begin position="1"/>
        <end position="30"/>
    </location>
</feature>
<feature type="chain" id="PRO_0000038162" description="Envelope glycoprotein B" evidence="2">
    <location>
        <begin position="31"/>
        <end position="904"/>
    </location>
</feature>
<feature type="topological domain" description="Virion surface" evidence="2">
    <location>
        <begin position="31"/>
        <end position="774"/>
    </location>
</feature>
<feature type="transmembrane region" description="Helical" evidence="2">
    <location>
        <begin position="775"/>
        <end position="795"/>
    </location>
</feature>
<feature type="topological domain" description="Intravirion" evidence="2">
    <location>
        <begin position="796"/>
        <end position="904"/>
    </location>
</feature>
<feature type="region of interest" description="Disordered" evidence="3">
    <location>
        <begin position="32"/>
        <end position="88"/>
    </location>
</feature>
<feature type="region of interest" description="Involved in fusion and/or binding to host membrane" evidence="2">
    <location>
        <begin position="173"/>
        <end position="179"/>
    </location>
</feature>
<feature type="region of interest" description="Involved in fusion and/or binding to host membrane" evidence="2">
    <location>
        <begin position="258"/>
        <end position="265"/>
    </location>
</feature>
<feature type="region of interest" description="Disordered" evidence="3">
    <location>
        <begin position="470"/>
        <end position="492"/>
    </location>
</feature>
<feature type="region of interest" description="Hydrophobic membrane proximal region" evidence="2">
    <location>
        <begin position="719"/>
        <end position="772"/>
    </location>
</feature>
<feature type="region of interest" description="Disordered" evidence="3">
    <location>
        <begin position="883"/>
        <end position="904"/>
    </location>
</feature>
<feature type="short sequence motif" description="Golgi targeting" evidence="2">
    <location>
        <begin position="849"/>
        <end position="852"/>
    </location>
</feature>
<feature type="short sequence motif" description="Internalization motif" evidence="2">
    <location>
        <begin position="889"/>
        <end position="892"/>
    </location>
</feature>
<feature type="compositionally biased region" description="Low complexity" evidence="3">
    <location>
        <begin position="32"/>
        <end position="52"/>
    </location>
</feature>
<feature type="compositionally biased region" description="Pro residues" evidence="3">
    <location>
        <begin position="476"/>
        <end position="485"/>
    </location>
</feature>
<feature type="modified residue" description="Phosphothreonine; by host" evidence="7 8">
    <location>
        <position position="887"/>
    </location>
</feature>
<feature type="glycosylation site" description="N-linked (GlcNAc...) asparagine; by host" evidence="2">
    <location>
        <position position="87"/>
    </location>
</feature>
<feature type="glycosylation site" description="N-linked (GlcNAc...) asparagine; by host" evidence="2">
    <location>
        <position position="141"/>
    </location>
</feature>
<feature type="glycosylation site" description="N-linked (GlcNAc...) asparagine; by host" evidence="2">
    <location>
        <position position="398"/>
    </location>
</feature>
<feature type="glycosylation site" description="N-linked (GlcNAc...) asparagine; by host" evidence="2">
    <location>
        <position position="430"/>
    </location>
</feature>
<feature type="glycosylation site" description="N-linked (GlcNAc...) asparagine; by host" evidence="2">
    <location>
        <position position="489"/>
    </location>
</feature>
<feature type="glycosylation site" description="N-linked (GlcNAc...) asparagine; by host" evidence="2">
    <location>
        <position position="674"/>
    </location>
</feature>
<feature type="disulfide bond" evidence="2 4 10">
    <location>
        <begin position="116"/>
        <end position="573"/>
    </location>
</feature>
<feature type="disulfide bond" evidence="2 4 10">
    <location>
        <begin position="133"/>
        <end position="529"/>
    </location>
</feature>
<feature type="disulfide bond" evidence="2 4 10">
    <location>
        <begin position="207"/>
        <end position="271"/>
    </location>
</feature>
<feature type="disulfide bond" evidence="2 4 10">
    <location>
        <begin position="364"/>
        <end position="412"/>
    </location>
</feature>
<feature type="disulfide bond" evidence="2 4 10">
    <location>
        <begin position="596"/>
        <end position="633"/>
    </location>
</feature>
<feature type="mutagenesis site" description="90% loss of fusion with host cell." evidence="9">
    <original>W</original>
    <variation>R</variation>
    <location>
        <position position="174"/>
    </location>
</feature>
<feature type="mutagenesis site" description="Complete loss of fusion with host cell." evidence="9">
    <original>Y</original>
    <variation>S</variation>
    <location>
        <position position="179"/>
    </location>
</feature>
<feature type="mutagenesis site" description="50% loss of fusion with host cell." evidence="9">
    <original>H</original>
    <variation>A</variation>
    <location>
        <position position="263"/>
    </location>
</feature>
<feature type="mutagenesis site" description="70% loss of fusion with host cell." evidence="9">
    <original>R</original>
    <variation>A</variation>
    <location>
        <position position="264"/>
    </location>
</feature>
<feature type="mutagenesis site" description="Defects in nuclear egress." evidence="7 8">
    <original>T</original>
    <variation>A</variation>
    <location>
        <position position="887"/>
    </location>
</feature>
<feature type="strand" evidence="11">
    <location>
        <begin position="113"/>
        <end position="115"/>
    </location>
</feature>
<feature type="strand" evidence="11">
    <location>
        <begin position="123"/>
        <end position="127"/>
    </location>
</feature>
<feature type="strand" evidence="11">
    <location>
        <begin position="145"/>
        <end position="152"/>
    </location>
</feature>
<feature type="strand" evidence="11">
    <location>
        <begin position="157"/>
        <end position="175"/>
    </location>
</feature>
<feature type="strand" evidence="11">
    <location>
        <begin position="180"/>
        <end position="191"/>
    </location>
</feature>
<feature type="helix" evidence="11">
    <location>
        <begin position="194"/>
        <end position="198"/>
    </location>
</feature>
<feature type="turn" evidence="11">
    <location>
        <begin position="199"/>
        <end position="204"/>
    </location>
</feature>
<feature type="strand" evidence="11">
    <location>
        <begin position="205"/>
        <end position="223"/>
    </location>
</feature>
<feature type="helix" evidence="11">
    <location>
        <begin position="224"/>
        <end position="226"/>
    </location>
</feature>
<feature type="strand" evidence="11">
    <location>
        <begin position="231"/>
        <end position="233"/>
    </location>
</feature>
<feature type="strand" evidence="11">
    <location>
        <begin position="246"/>
        <end position="249"/>
    </location>
</feature>
<feature type="strand" evidence="11">
    <location>
        <begin position="262"/>
        <end position="280"/>
    </location>
</feature>
<feature type="strand" evidence="11">
    <location>
        <begin position="287"/>
        <end position="289"/>
    </location>
</feature>
<feature type="strand" evidence="15">
    <location>
        <begin position="290"/>
        <end position="292"/>
    </location>
</feature>
<feature type="strand" evidence="13">
    <location>
        <begin position="303"/>
        <end position="306"/>
    </location>
</feature>
<feature type="helix" evidence="11">
    <location>
        <begin position="307"/>
        <end position="309"/>
    </location>
</feature>
<feature type="strand" evidence="14">
    <location>
        <begin position="312"/>
        <end position="314"/>
    </location>
</feature>
<feature type="helix" evidence="11">
    <location>
        <begin position="316"/>
        <end position="318"/>
    </location>
</feature>
<feature type="strand" evidence="11">
    <location>
        <begin position="319"/>
        <end position="325"/>
    </location>
</feature>
<feature type="turn" evidence="13">
    <location>
        <begin position="330"/>
        <end position="332"/>
    </location>
</feature>
<feature type="strand" evidence="11">
    <location>
        <begin position="340"/>
        <end position="346"/>
    </location>
</feature>
<feature type="strand" evidence="11">
    <location>
        <begin position="351"/>
        <end position="355"/>
    </location>
</feature>
<feature type="turn" evidence="11">
    <location>
        <begin position="360"/>
        <end position="362"/>
    </location>
</feature>
<feature type="strand" evidence="11">
    <location>
        <begin position="365"/>
        <end position="373"/>
    </location>
</feature>
<feature type="strand" evidence="11">
    <location>
        <begin position="375"/>
        <end position="380"/>
    </location>
</feature>
<feature type="strand" evidence="11">
    <location>
        <begin position="383"/>
        <end position="388"/>
    </location>
</feature>
<feature type="turn" evidence="11">
    <location>
        <begin position="389"/>
        <end position="392"/>
    </location>
</feature>
<feature type="strand" evidence="11">
    <location>
        <begin position="393"/>
        <end position="400"/>
    </location>
</feature>
<feature type="helix" evidence="11">
    <location>
        <begin position="404"/>
        <end position="406"/>
    </location>
</feature>
<feature type="strand" evidence="12">
    <location>
        <begin position="407"/>
        <end position="409"/>
    </location>
</feature>
<feature type="helix" evidence="11">
    <location>
        <begin position="412"/>
        <end position="428"/>
    </location>
</feature>
<feature type="turn" evidence="11">
    <location>
        <begin position="429"/>
        <end position="432"/>
    </location>
</feature>
<feature type="strand" evidence="13">
    <location>
        <begin position="433"/>
        <end position="435"/>
    </location>
</feature>
<feature type="strand" evidence="11">
    <location>
        <begin position="440"/>
        <end position="444"/>
    </location>
</feature>
<feature type="turn" evidence="11">
    <location>
        <begin position="445"/>
        <end position="447"/>
    </location>
</feature>
<feature type="strand" evidence="11">
    <location>
        <begin position="448"/>
        <end position="454"/>
    </location>
</feature>
<feature type="helix" evidence="13">
    <location>
        <begin position="458"/>
        <end position="463"/>
    </location>
</feature>
<feature type="helix" evidence="13">
    <location>
        <begin position="464"/>
        <end position="470"/>
    </location>
</feature>
<feature type="helix" evidence="11">
    <location>
        <begin position="502"/>
        <end position="545"/>
    </location>
</feature>
<feature type="helix" evidence="11">
    <location>
        <begin position="547"/>
        <end position="555"/>
    </location>
</feature>
<feature type="strand" evidence="11">
    <location>
        <begin position="559"/>
        <end position="563"/>
    </location>
</feature>
<feature type="strand" evidence="11">
    <location>
        <begin position="565"/>
        <end position="572"/>
    </location>
</feature>
<feature type="strand" evidence="11">
    <location>
        <begin position="574"/>
        <end position="576"/>
    </location>
</feature>
<feature type="helix" evidence="11">
    <location>
        <begin position="578"/>
        <end position="580"/>
    </location>
</feature>
<feature type="strand" evidence="11">
    <location>
        <begin position="581"/>
        <end position="583"/>
    </location>
</feature>
<feature type="strand" evidence="13">
    <location>
        <begin position="590"/>
        <end position="592"/>
    </location>
</feature>
<feature type="strand" evidence="11">
    <location>
        <begin position="595"/>
        <end position="599"/>
    </location>
</feature>
<feature type="strand" evidence="11">
    <location>
        <begin position="601"/>
        <end position="604"/>
    </location>
</feature>
<feature type="strand" evidence="13">
    <location>
        <begin position="606"/>
        <end position="610"/>
    </location>
</feature>
<feature type="strand" evidence="11">
    <location>
        <begin position="613"/>
        <end position="617"/>
    </location>
</feature>
<feature type="helix" evidence="12">
    <location>
        <begin position="619"/>
        <end position="621"/>
    </location>
</feature>
<feature type="strand" evidence="11">
    <location>
        <begin position="622"/>
        <end position="625"/>
    </location>
</feature>
<feature type="strand" evidence="11">
    <location>
        <begin position="630"/>
        <end position="632"/>
    </location>
</feature>
<feature type="strand" evidence="11">
    <location>
        <begin position="638"/>
        <end position="643"/>
    </location>
</feature>
<feature type="strand" evidence="11">
    <location>
        <begin position="646"/>
        <end position="651"/>
    </location>
</feature>
<feature type="strand" evidence="11">
    <location>
        <begin position="654"/>
        <end position="660"/>
    </location>
</feature>
<feature type="helix" evidence="11">
    <location>
        <begin position="661"/>
        <end position="663"/>
    </location>
</feature>
<feature type="strand" evidence="11">
    <location>
        <begin position="664"/>
        <end position="667"/>
    </location>
</feature>
<feature type="helix" evidence="11">
    <location>
        <begin position="691"/>
        <end position="697"/>
    </location>
</feature>
<feature type="strand" evidence="11">
    <location>
        <begin position="698"/>
        <end position="700"/>
    </location>
</feature>
<feature type="helix" evidence="11">
    <location>
        <begin position="702"/>
        <end position="709"/>
    </location>
</feature>
<feature type="helix" evidence="11">
    <location>
        <begin position="712"/>
        <end position="716"/>
    </location>
</feature>